<protein>
    <recommendedName>
        <fullName evidence="1">Crossover junction endodeoxyribonuclease RuvC</fullName>
        <ecNumber evidence="1">3.1.21.10</ecNumber>
    </recommendedName>
    <alternativeName>
        <fullName evidence="1">Holliday junction nuclease RuvC</fullName>
    </alternativeName>
    <alternativeName>
        <fullName evidence="1">Holliday junction resolvase RuvC</fullName>
    </alternativeName>
</protein>
<name>RUVC_PARXL</name>
<reference key="1">
    <citation type="journal article" date="2006" name="Proc. Natl. Acad. Sci. U.S.A.">
        <title>Burkholderia xenovorans LB400 harbors a multi-replicon, 9.73-Mbp genome shaped for versatility.</title>
        <authorList>
            <person name="Chain P.S.G."/>
            <person name="Denef V.J."/>
            <person name="Konstantinidis K.T."/>
            <person name="Vergez L.M."/>
            <person name="Agullo L."/>
            <person name="Reyes V.L."/>
            <person name="Hauser L."/>
            <person name="Cordova M."/>
            <person name="Gomez L."/>
            <person name="Gonzalez M."/>
            <person name="Land M."/>
            <person name="Lao V."/>
            <person name="Larimer F."/>
            <person name="LiPuma J.J."/>
            <person name="Mahenthiralingam E."/>
            <person name="Malfatti S.A."/>
            <person name="Marx C.J."/>
            <person name="Parnell J.J."/>
            <person name="Ramette A."/>
            <person name="Richardson P."/>
            <person name="Seeger M."/>
            <person name="Smith D."/>
            <person name="Spilker T."/>
            <person name="Sul W.J."/>
            <person name="Tsoi T.V."/>
            <person name="Ulrich L.E."/>
            <person name="Zhulin I.B."/>
            <person name="Tiedje J.M."/>
        </authorList>
    </citation>
    <scope>NUCLEOTIDE SEQUENCE [LARGE SCALE GENOMIC DNA]</scope>
    <source>
        <strain>LB400</strain>
    </source>
</reference>
<comment type="function">
    <text evidence="1">The RuvA-RuvB-RuvC complex processes Holliday junction (HJ) DNA during genetic recombination and DNA repair. Endonuclease that resolves HJ intermediates. Cleaves cruciform DNA by making single-stranded nicks across the HJ at symmetrical positions within the homologous arms, yielding a 5'-phosphate and a 3'-hydroxyl group; requires a central core of homology in the junction. The consensus cleavage sequence is 5'-(A/T)TT(C/G)-3'. Cleavage occurs on the 3'-side of the TT dinucleotide at the point of strand exchange. HJ branch migration catalyzed by RuvA-RuvB allows RuvC to scan DNA until it finds its consensus sequence, where it cleaves and resolves the cruciform DNA.</text>
</comment>
<comment type="catalytic activity">
    <reaction evidence="1">
        <text>Endonucleolytic cleavage at a junction such as a reciprocal single-stranded crossover between two homologous DNA duplexes (Holliday junction).</text>
        <dbReference type="EC" id="3.1.21.10"/>
    </reaction>
</comment>
<comment type="cofactor">
    <cofactor evidence="1">
        <name>Mg(2+)</name>
        <dbReference type="ChEBI" id="CHEBI:18420"/>
    </cofactor>
    <text evidence="1">Binds 2 Mg(2+) ion per subunit.</text>
</comment>
<comment type="subunit">
    <text evidence="1">Homodimer which binds Holliday junction (HJ) DNA. The HJ becomes 2-fold symmetrical on binding to RuvC with unstacked arms; it has a different conformation from HJ DNA in complex with RuvA. In the full resolvosome a probable DNA-RuvA(4)-RuvB(12)-RuvC(2) complex forms which resolves the HJ.</text>
</comment>
<comment type="subcellular location">
    <subcellularLocation>
        <location evidence="1">Cytoplasm</location>
    </subcellularLocation>
</comment>
<comment type="similarity">
    <text evidence="1">Belongs to the RuvC family.</text>
</comment>
<sequence length="180" mass="18596">MRILGIDPGLRVTGFGVIDQSGHTLSYVASGVIKTADADLPSRLGTIFEGISTLIRQHSPDQSAIEKVFVNVNPQSTLLLGQARGAAICGLVAGGVPVAEYTALQLKQAVVGYGRATKEQMQQMVVRLLNLSGVPGTDAADALGMAICHAHGGTTLSTLGGIAPSLAKKGLRVRRGRLVG</sequence>
<organism>
    <name type="scientific">Paraburkholderia xenovorans (strain LB400)</name>
    <dbReference type="NCBI Taxonomy" id="266265"/>
    <lineage>
        <taxon>Bacteria</taxon>
        <taxon>Pseudomonadati</taxon>
        <taxon>Pseudomonadota</taxon>
        <taxon>Betaproteobacteria</taxon>
        <taxon>Burkholderiales</taxon>
        <taxon>Burkholderiaceae</taxon>
        <taxon>Paraburkholderia</taxon>
    </lineage>
</organism>
<dbReference type="EC" id="3.1.21.10" evidence="1"/>
<dbReference type="EMBL" id="CP000270">
    <property type="protein sequence ID" value="ABE32317.1"/>
    <property type="molecule type" value="Genomic_DNA"/>
</dbReference>
<dbReference type="RefSeq" id="WP_007180437.1">
    <property type="nucleotide sequence ID" value="NZ_CP008760.1"/>
</dbReference>
<dbReference type="SMR" id="Q13UC2"/>
<dbReference type="STRING" id="266265.Bxe_A0617"/>
<dbReference type="GeneID" id="97002844"/>
<dbReference type="KEGG" id="bxb:DR64_2785"/>
<dbReference type="KEGG" id="bxe:Bxe_A0617"/>
<dbReference type="eggNOG" id="COG0817">
    <property type="taxonomic scope" value="Bacteria"/>
</dbReference>
<dbReference type="OrthoDB" id="9805499at2"/>
<dbReference type="Proteomes" id="UP000001817">
    <property type="component" value="Chromosome 1"/>
</dbReference>
<dbReference type="GO" id="GO:0005737">
    <property type="term" value="C:cytoplasm"/>
    <property type="evidence" value="ECO:0007669"/>
    <property type="project" value="UniProtKB-SubCell"/>
</dbReference>
<dbReference type="GO" id="GO:0048476">
    <property type="term" value="C:Holliday junction resolvase complex"/>
    <property type="evidence" value="ECO:0007669"/>
    <property type="project" value="UniProtKB-UniRule"/>
</dbReference>
<dbReference type="GO" id="GO:0008821">
    <property type="term" value="F:crossover junction DNA endonuclease activity"/>
    <property type="evidence" value="ECO:0007669"/>
    <property type="project" value="UniProtKB-UniRule"/>
</dbReference>
<dbReference type="GO" id="GO:0003677">
    <property type="term" value="F:DNA binding"/>
    <property type="evidence" value="ECO:0007669"/>
    <property type="project" value="UniProtKB-KW"/>
</dbReference>
<dbReference type="GO" id="GO:0000287">
    <property type="term" value="F:magnesium ion binding"/>
    <property type="evidence" value="ECO:0007669"/>
    <property type="project" value="UniProtKB-UniRule"/>
</dbReference>
<dbReference type="GO" id="GO:0006310">
    <property type="term" value="P:DNA recombination"/>
    <property type="evidence" value="ECO:0007669"/>
    <property type="project" value="UniProtKB-UniRule"/>
</dbReference>
<dbReference type="GO" id="GO:0006281">
    <property type="term" value="P:DNA repair"/>
    <property type="evidence" value="ECO:0007669"/>
    <property type="project" value="UniProtKB-UniRule"/>
</dbReference>
<dbReference type="CDD" id="cd16962">
    <property type="entry name" value="RuvC"/>
    <property type="match status" value="1"/>
</dbReference>
<dbReference type="FunFam" id="3.30.420.10:FF:000002">
    <property type="entry name" value="Crossover junction endodeoxyribonuclease RuvC"/>
    <property type="match status" value="1"/>
</dbReference>
<dbReference type="Gene3D" id="3.30.420.10">
    <property type="entry name" value="Ribonuclease H-like superfamily/Ribonuclease H"/>
    <property type="match status" value="1"/>
</dbReference>
<dbReference type="HAMAP" id="MF_00034">
    <property type="entry name" value="RuvC"/>
    <property type="match status" value="1"/>
</dbReference>
<dbReference type="InterPro" id="IPR012337">
    <property type="entry name" value="RNaseH-like_sf"/>
</dbReference>
<dbReference type="InterPro" id="IPR036397">
    <property type="entry name" value="RNaseH_sf"/>
</dbReference>
<dbReference type="InterPro" id="IPR020563">
    <property type="entry name" value="X-over_junc_endoDNase_Mg_BS"/>
</dbReference>
<dbReference type="InterPro" id="IPR002176">
    <property type="entry name" value="X-over_junc_endoDNase_RuvC"/>
</dbReference>
<dbReference type="NCBIfam" id="TIGR00228">
    <property type="entry name" value="ruvC"/>
    <property type="match status" value="1"/>
</dbReference>
<dbReference type="PANTHER" id="PTHR30194">
    <property type="entry name" value="CROSSOVER JUNCTION ENDODEOXYRIBONUCLEASE RUVC"/>
    <property type="match status" value="1"/>
</dbReference>
<dbReference type="PANTHER" id="PTHR30194:SF3">
    <property type="entry name" value="CROSSOVER JUNCTION ENDODEOXYRIBONUCLEASE RUVC"/>
    <property type="match status" value="1"/>
</dbReference>
<dbReference type="Pfam" id="PF02075">
    <property type="entry name" value="RuvC"/>
    <property type="match status" value="1"/>
</dbReference>
<dbReference type="PRINTS" id="PR00696">
    <property type="entry name" value="RSOLVASERUVC"/>
</dbReference>
<dbReference type="SUPFAM" id="SSF53098">
    <property type="entry name" value="Ribonuclease H-like"/>
    <property type="match status" value="1"/>
</dbReference>
<dbReference type="PROSITE" id="PS01321">
    <property type="entry name" value="RUVC"/>
    <property type="match status" value="1"/>
</dbReference>
<feature type="chain" id="PRO_1000002734" description="Crossover junction endodeoxyribonuclease RuvC">
    <location>
        <begin position="1"/>
        <end position="180"/>
    </location>
</feature>
<feature type="active site" evidence="1">
    <location>
        <position position="7"/>
    </location>
</feature>
<feature type="active site" evidence="1">
    <location>
        <position position="66"/>
    </location>
</feature>
<feature type="active site" evidence="1">
    <location>
        <position position="138"/>
    </location>
</feature>
<feature type="binding site" evidence="1">
    <location>
        <position position="7"/>
    </location>
    <ligand>
        <name>Mg(2+)</name>
        <dbReference type="ChEBI" id="CHEBI:18420"/>
        <label>1</label>
    </ligand>
</feature>
<feature type="binding site" evidence="1">
    <location>
        <position position="66"/>
    </location>
    <ligand>
        <name>Mg(2+)</name>
        <dbReference type="ChEBI" id="CHEBI:18420"/>
        <label>2</label>
    </ligand>
</feature>
<feature type="binding site" evidence="1">
    <location>
        <position position="138"/>
    </location>
    <ligand>
        <name>Mg(2+)</name>
        <dbReference type="ChEBI" id="CHEBI:18420"/>
        <label>1</label>
    </ligand>
</feature>
<proteinExistence type="inferred from homology"/>
<gene>
    <name evidence="1" type="primary">ruvC</name>
    <name type="ordered locus">Bxeno_A3779</name>
    <name type="ORF">Bxe_A0617</name>
</gene>
<accession>Q13UC2</accession>
<keyword id="KW-0963">Cytoplasm</keyword>
<keyword id="KW-0227">DNA damage</keyword>
<keyword id="KW-0233">DNA recombination</keyword>
<keyword id="KW-0234">DNA repair</keyword>
<keyword id="KW-0238">DNA-binding</keyword>
<keyword id="KW-0255">Endonuclease</keyword>
<keyword id="KW-0378">Hydrolase</keyword>
<keyword id="KW-0460">Magnesium</keyword>
<keyword id="KW-0479">Metal-binding</keyword>
<keyword id="KW-0540">Nuclease</keyword>
<keyword id="KW-1185">Reference proteome</keyword>
<evidence type="ECO:0000255" key="1">
    <source>
        <dbReference type="HAMAP-Rule" id="MF_00034"/>
    </source>
</evidence>